<feature type="chain" id="PRO_0000375451" description="Succinyl-diaminopimelate desuccinylase">
    <location>
        <begin position="1"/>
        <end position="377"/>
    </location>
</feature>
<feature type="active site" evidence="1">
    <location>
        <position position="69"/>
    </location>
</feature>
<feature type="active site" description="Proton acceptor" evidence="1">
    <location>
        <position position="134"/>
    </location>
</feature>
<feature type="binding site" evidence="1">
    <location>
        <position position="67"/>
    </location>
    <ligand>
        <name>Zn(2+)</name>
        <dbReference type="ChEBI" id="CHEBI:29105"/>
        <label>1</label>
    </ligand>
</feature>
<feature type="binding site" evidence="1">
    <location>
        <position position="100"/>
    </location>
    <ligand>
        <name>Zn(2+)</name>
        <dbReference type="ChEBI" id="CHEBI:29105"/>
        <label>1</label>
    </ligand>
</feature>
<feature type="binding site" evidence="1">
    <location>
        <position position="100"/>
    </location>
    <ligand>
        <name>Zn(2+)</name>
        <dbReference type="ChEBI" id="CHEBI:29105"/>
        <label>2</label>
    </ligand>
</feature>
<feature type="binding site" evidence="1">
    <location>
        <position position="135"/>
    </location>
    <ligand>
        <name>Zn(2+)</name>
        <dbReference type="ChEBI" id="CHEBI:29105"/>
        <label>2</label>
    </ligand>
</feature>
<feature type="binding site" evidence="1">
    <location>
        <position position="163"/>
    </location>
    <ligand>
        <name>Zn(2+)</name>
        <dbReference type="ChEBI" id="CHEBI:29105"/>
        <label>1</label>
    </ligand>
</feature>
<feature type="binding site" evidence="1">
    <location>
        <position position="349"/>
    </location>
    <ligand>
        <name>Zn(2+)</name>
        <dbReference type="ChEBI" id="CHEBI:29105"/>
        <label>2</label>
    </ligand>
</feature>
<dbReference type="EC" id="3.5.1.18" evidence="1"/>
<dbReference type="EMBL" id="CP001091">
    <property type="protein sequence ID" value="ACE62613.1"/>
    <property type="molecule type" value="Genomic_DNA"/>
</dbReference>
<dbReference type="RefSeq" id="WP_009874939.1">
    <property type="nucleotide sequence ID" value="NC_010939.1"/>
</dbReference>
<dbReference type="SMR" id="B3H2U3"/>
<dbReference type="KEGG" id="apa:APP7_1961"/>
<dbReference type="PATRIC" id="fig|416269.6.peg.1950"/>
<dbReference type="HOGENOM" id="CLU_021802_4_0_6"/>
<dbReference type="UniPathway" id="UPA00034">
    <property type="reaction ID" value="UER00021"/>
</dbReference>
<dbReference type="Proteomes" id="UP000001226">
    <property type="component" value="Chromosome"/>
</dbReference>
<dbReference type="GO" id="GO:0008777">
    <property type="term" value="F:acetylornithine deacetylase activity"/>
    <property type="evidence" value="ECO:0007669"/>
    <property type="project" value="TreeGrafter"/>
</dbReference>
<dbReference type="GO" id="GO:0050897">
    <property type="term" value="F:cobalt ion binding"/>
    <property type="evidence" value="ECO:0007669"/>
    <property type="project" value="UniProtKB-UniRule"/>
</dbReference>
<dbReference type="GO" id="GO:0009014">
    <property type="term" value="F:succinyl-diaminopimelate desuccinylase activity"/>
    <property type="evidence" value="ECO:0007669"/>
    <property type="project" value="UniProtKB-UniRule"/>
</dbReference>
<dbReference type="GO" id="GO:0008270">
    <property type="term" value="F:zinc ion binding"/>
    <property type="evidence" value="ECO:0007669"/>
    <property type="project" value="UniProtKB-UniRule"/>
</dbReference>
<dbReference type="GO" id="GO:0019877">
    <property type="term" value="P:diaminopimelate biosynthetic process"/>
    <property type="evidence" value="ECO:0007669"/>
    <property type="project" value="UniProtKB-UniRule"/>
</dbReference>
<dbReference type="GO" id="GO:0006526">
    <property type="term" value="P:L-arginine biosynthetic process"/>
    <property type="evidence" value="ECO:0007669"/>
    <property type="project" value="TreeGrafter"/>
</dbReference>
<dbReference type="GO" id="GO:0009089">
    <property type="term" value="P:lysine biosynthetic process via diaminopimelate"/>
    <property type="evidence" value="ECO:0007669"/>
    <property type="project" value="UniProtKB-UniRule"/>
</dbReference>
<dbReference type="CDD" id="cd03891">
    <property type="entry name" value="M20_DapE_proteobac"/>
    <property type="match status" value="1"/>
</dbReference>
<dbReference type="FunFam" id="3.30.70.360:FF:000011">
    <property type="entry name" value="Succinyl-diaminopimelate desuccinylase"/>
    <property type="match status" value="1"/>
</dbReference>
<dbReference type="FunFam" id="3.40.630.10:FF:000005">
    <property type="entry name" value="Succinyl-diaminopimelate desuccinylase"/>
    <property type="match status" value="1"/>
</dbReference>
<dbReference type="Gene3D" id="1.10.150.900">
    <property type="match status" value="1"/>
</dbReference>
<dbReference type="Gene3D" id="3.30.70.360">
    <property type="match status" value="1"/>
</dbReference>
<dbReference type="Gene3D" id="3.40.630.10">
    <property type="entry name" value="Zn peptidases"/>
    <property type="match status" value="1"/>
</dbReference>
<dbReference type="HAMAP" id="MF_01690">
    <property type="entry name" value="DapE"/>
    <property type="match status" value="1"/>
</dbReference>
<dbReference type="InterPro" id="IPR036264">
    <property type="entry name" value="Bact_exopeptidase_dim_dom"/>
</dbReference>
<dbReference type="InterPro" id="IPR005941">
    <property type="entry name" value="DapE_proteobac"/>
</dbReference>
<dbReference type="InterPro" id="IPR002933">
    <property type="entry name" value="Peptidase_M20"/>
</dbReference>
<dbReference type="InterPro" id="IPR011650">
    <property type="entry name" value="Peptidase_M20_dimer"/>
</dbReference>
<dbReference type="InterPro" id="IPR050072">
    <property type="entry name" value="Peptidase_M20A"/>
</dbReference>
<dbReference type="NCBIfam" id="TIGR01246">
    <property type="entry name" value="dapE_proteo"/>
    <property type="match status" value="1"/>
</dbReference>
<dbReference type="NCBIfam" id="NF009557">
    <property type="entry name" value="PRK13009.1"/>
    <property type="match status" value="1"/>
</dbReference>
<dbReference type="PANTHER" id="PTHR43808">
    <property type="entry name" value="ACETYLORNITHINE DEACETYLASE"/>
    <property type="match status" value="1"/>
</dbReference>
<dbReference type="PANTHER" id="PTHR43808:SF31">
    <property type="entry name" value="N-ACETYL-L-CITRULLINE DEACETYLASE"/>
    <property type="match status" value="1"/>
</dbReference>
<dbReference type="Pfam" id="PF07687">
    <property type="entry name" value="M20_dimer"/>
    <property type="match status" value="1"/>
</dbReference>
<dbReference type="Pfam" id="PF01546">
    <property type="entry name" value="Peptidase_M20"/>
    <property type="match status" value="1"/>
</dbReference>
<dbReference type="SUPFAM" id="SSF55031">
    <property type="entry name" value="Bacterial exopeptidase dimerisation domain"/>
    <property type="match status" value="1"/>
</dbReference>
<dbReference type="SUPFAM" id="SSF53187">
    <property type="entry name" value="Zn-dependent exopeptidases"/>
    <property type="match status" value="1"/>
</dbReference>
<proteinExistence type="inferred from homology"/>
<organism>
    <name type="scientific">Actinobacillus pleuropneumoniae serotype 7 (strain AP76)</name>
    <dbReference type="NCBI Taxonomy" id="537457"/>
    <lineage>
        <taxon>Bacteria</taxon>
        <taxon>Pseudomonadati</taxon>
        <taxon>Pseudomonadota</taxon>
        <taxon>Gammaproteobacteria</taxon>
        <taxon>Pasteurellales</taxon>
        <taxon>Pasteurellaceae</taxon>
        <taxon>Actinobacillus</taxon>
    </lineage>
</organism>
<comment type="function">
    <text evidence="1">Catalyzes the hydrolysis of N-succinyl-L,L-diaminopimelic acid (SDAP), forming succinate and LL-2,6-diaminopimelate (DAP), an intermediate involved in the bacterial biosynthesis of lysine and meso-diaminopimelic acid, an essential component of bacterial cell walls.</text>
</comment>
<comment type="catalytic activity">
    <reaction evidence="1">
        <text>N-succinyl-(2S,6S)-2,6-diaminopimelate + H2O = (2S,6S)-2,6-diaminopimelate + succinate</text>
        <dbReference type="Rhea" id="RHEA:22608"/>
        <dbReference type="ChEBI" id="CHEBI:15377"/>
        <dbReference type="ChEBI" id="CHEBI:30031"/>
        <dbReference type="ChEBI" id="CHEBI:57609"/>
        <dbReference type="ChEBI" id="CHEBI:58087"/>
        <dbReference type="EC" id="3.5.1.18"/>
    </reaction>
</comment>
<comment type="cofactor">
    <cofactor evidence="1">
        <name>Zn(2+)</name>
        <dbReference type="ChEBI" id="CHEBI:29105"/>
    </cofactor>
    <cofactor evidence="1">
        <name>Co(2+)</name>
        <dbReference type="ChEBI" id="CHEBI:48828"/>
    </cofactor>
    <text evidence="1">Binds 2 Zn(2+) or Co(2+) ions per subunit.</text>
</comment>
<comment type="pathway">
    <text evidence="1">Amino-acid biosynthesis; L-lysine biosynthesis via DAP pathway; LL-2,6-diaminopimelate from (S)-tetrahydrodipicolinate (succinylase route): step 3/3.</text>
</comment>
<comment type="subunit">
    <text evidence="1">Homodimer.</text>
</comment>
<comment type="similarity">
    <text evidence="1">Belongs to the peptidase M20A family. DapE subfamily.</text>
</comment>
<protein>
    <recommendedName>
        <fullName evidence="1">Succinyl-diaminopimelate desuccinylase</fullName>
        <shortName evidence="1">SDAP desuccinylase</shortName>
        <ecNumber evidence="1">3.5.1.18</ecNumber>
    </recommendedName>
    <alternativeName>
        <fullName evidence="1">N-succinyl-LL-2,6-diaminoheptanedioate amidohydrolase</fullName>
    </alternativeName>
</protein>
<gene>
    <name evidence="1" type="primary">dapE</name>
    <name type="ordered locus">APP7_1961</name>
</gene>
<accession>B3H2U3</accession>
<name>DAPE_ACTP7</name>
<reference key="1">
    <citation type="submission" date="2008-06" db="EMBL/GenBank/DDBJ databases">
        <title>Genome and proteome analysis of A. pleuropneumoniae serotype 7.</title>
        <authorList>
            <person name="Linke B."/>
            <person name="Buettner F."/>
            <person name="Martinez-Arias R."/>
            <person name="Goesmann A."/>
            <person name="Baltes N."/>
            <person name="Tegetmeyer H."/>
            <person name="Singh M."/>
            <person name="Gerlach G.F."/>
        </authorList>
    </citation>
    <scope>NUCLEOTIDE SEQUENCE [LARGE SCALE GENOMIC DNA]</scope>
    <source>
        <strain>AP76</strain>
    </source>
</reference>
<keyword id="KW-0028">Amino-acid biosynthesis</keyword>
<keyword id="KW-0170">Cobalt</keyword>
<keyword id="KW-0220">Diaminopimelate biosynthesis</keyword>
<keyword id="KW-0378">Hydrolase</keyword>
<keyword id="KW-0457">Lysine biosynthesis</keyword>
<keyword id="KW-0479">Metal-binding</keyword>
<keyword id="KW-0862">Zinc</keyword>
<sequence>MKHNIINLAQDLIRRPSVSPDDQGCQQVIAERLAQLGFTLEWLPFGDTLNLWATHGTQDPCVVFAGHTDVVPVGDETQWQYPPFSAEIVDGTLYGRGAADMKGSLAALVIAAETFVKNNPNHKGKIALLITSDEEAAAKAGTVKVVETLMARQEAVHYAVVGEPSSGKVLGDVIKNGRRGSITGELYIEGVQGHVAYPHLAENPVHTSLNFLTELTTYQWDNGNEFFPPTSLQIANIKAGTGSNNVIPGELYVQFNLRYCTEVTDEIIKNKVAEMLAKHQLKHRISWNLSGQPFLAGNGELVKATVQAVENVTKITPRLDTSGGTSDGRFIALMGAEVVEFGPLNATIHKVNECVSVEDLGKCGEVYYHILERLLKS</sequence>
<evidence type="ECO:0000255" key="1">
    <source>
        <dbReference type="HAMAP-Rule" id="MF_01690"/>
    </source>
</evidence>